<reference key="1">
    <citation type="journal article" date="1999" name="Nature">
        <title>Sequence and analysis of chromosome 4 of the plant Arabidopsis thaliana.</title>
        <authorList>
            <person name="Mayer K.F.X."/>
            <person name="Schueller C."/>
            <person name="Wambutt R."/>
            <person name="Murphy G."/>
            <person name="Volckaert G."/>
            <person name="Pohl T."/>
            <person name="Duesterhoeft A."/>
            <person name="Stiekema W."/>
            <person name="Entian K.-D."/>
            <person name="Terryn N."/>
            <person name="Harris B."/>
            <person name="Ansorge W."/>
            <person name="Brandt P."/>
            <person name="Grivell L.A."/>
            <person name="Rieger M."/>
            <person name="Weichselgartner M."/>
            <person name="de Simone V."/>
            <person name="Obermaier B."/>
            <person name="Mache R."/>
            <person name="Mueller M."/>
            <person name="Kreis M."/>
            <person name="Delseny M."/>
            <person name="Puigdomenech P."/>
            <person name="Watson M."/>
            <person name="Schmidtheini T."/>
            <person name="Reichert B."/>
            <person name="Portetelle D."/>
            <person name="Perez-Alonso M."/>
            <person name="Boutry M."/>
            <person name="Bancroft I."/>
            <person name="Vos P."/>
            <person name="Hoheisel J."/>
            <person name="Zimmermann W."/>
            <person name="Wedler H."/>
            <person name="Ridley P."/>
            <person name="Langham S.-A."/>
            <person name="McCullagh B."/>
            <person name="Bilham L."/>
            <person name="Robben J."/>
            <person name="van der Schueren J."/>
            <person name="Grymonprez B."/>
            <person name="Chuang Y.-J."/>
            <person name="Vandenbussche F."/>
            <person name="Braeken M."/>
            <person name="Weltjens I."/>
            <person name="Voet M."/>
            <person name="Bastiaens I."/>
            <person name="Aert R."/>
            <person name="Defoor E."/>
            <person name="Weitzenegger T."/>
            <person name="Bothe G."/>
            <person name="Ramsperger U."/>
            <person name="Hilbert H."/>
            <person name="Braun M."/>
            <person name="Holzer E."/>
            <person name="Brandt A."/>
            <person name="Peters S."/>
            <person name="van Staveren M."/>
            <person name="Dirkse W."/>
            <person name="Mooijman P."/>
            <person name="Klein Lankhorst R."/>
            <person name="Rose M."/>
            <person name="Hauf J."/>
            <person name="Koetter P."/>
            <person name="Berneiser S."/>
            <person name="Hempel S."/>
            <person name="Feldpausch M."/>
            <person name="Lamberth S."/>
            <person name="Van den Daele H."/>
            <person name="De Keyser A."/>
            <person name="Buysshaert C."/>
            <person name="Gielen J."/>
            <person name="Villarroel R."/>
            <person name="De Clercq R."/>
            <person name="van Montagu M."/>
            <person name="Rogers J."/>
            <person name="Cronin A."/>
            <person name="Quail M.A."/>
            <person name="Bray-Allen S."/>
            <person name="Clark L."/>
            <person name="Doggett J."/>
            <person name="Hall S."/>
            <person name="Kay M."/>
            <person name="Lennard N."/>
            <person name="McLay K."/>
            <person name="Mayes R."/>
            <person name="Pettett A."/>
            <person name="Rajandream M.A."/>
            <person name="Lyne M."/>
            <person name="Benes V."/>
            <person name="Rechmann S."/>
            <person name="Borkova D."/>
            <person name="Bloecker H."/>
            <person name="Scharfe M."/>
            <person name="Grimm M."/>
            <person name="Loehnert T.-H."/>
            <person name="Dose S."/>
            <person name="de Haan M."/>
            <person name="Maarse A.C."/>
            <person name="Schaefer M."/>
            <person name="Mueller-Auer S."/>
            <person name="Gabel C."/>
            <person name="Fuchs M."/>
            <person name="Fartmann B."/>
            <person name="Granderath K."/>
            <person name="Dauner D."/>
            <person name="Herzl A."/>
            <person name="Neumann S."/>
            <person name="Argiriou A."/>
            <person name="Vitale D."/>
            <person name="Liguori R."/>
            <person name="Piravandi E."/>
            <person name="Massenet O."/>
            <person name="Quigley F."/>
            <person name="Clabauld G."/>
            <person name="Muendlein A."/>
            <person name="Felber R."/>
            <person name="Schnabl S."/>
            <person name="Hiller R."/>
            <person name="Schmidt W."/>
            <person name="Lecharny A."/>
            <person name="Aubourg S."/>
            <person name="Chefdor F."/>
            <person name="Cooke R."/>
            <person name="Berger C."/>
            <person name="Monfort A."/>
            <person name="Casacuberta E."/>
            <person name="Gibbons T."/>
            <person name="Weber N."/>
            <person name="Vandenbol M."/>
            <person name="Bargues M."/>
            <person name="Terol J."/>
            <person name="Torres A."/>
            <person name="Perez-Perez A."/>
            <person name="Purnelle B."/>
            <person name="Bent E."/>
            <person name="Johnson S."/>
            <person name="Tacon D."/>
            <person name="Jesse T."/>
            <person name="Heijnen L."/>
            <person name="Schwarz S."/>
            <person name="Scholler P."/>
            <person name="Heber S."/>
            <person name="Francs P."/>
            <person name="Bielke C."/>
            <person name="Frishman D."/>
            <person name="Haase D."/>
            <person name="Lemcke K."/>
            <person name="Mewes H.-W."/>
            <person name="Stocker S."/>
            <person name="Zaccaria P."/>
            <person name="Bevan M."/>
            <person name="Wilson R.K."/>
            <person name="de la Bastide M."/>
            <person name="Habermann K."/>
            <person name="Parnell L."/>
            <person name="Dedhia N."/>
            <person name="Gnoj L."/>
            <person name="Schutz K."/>
            <person name="Huang E."/>
            <person name="Spiegel L."/>
            <person name="Sekhon M."/>
            <person name="Murray J."/>
            <person name="Sheet P."/>
            <person name="Cordes M."/>
            <person name="Abu-Threideh J."/>
            <person name="Stoneking T."/>
            <person name="Kalicki J."/>
            <person name="Graves T."/>
            <person name="Harmon G."/>
            <person name="Edwards J."/>
            <person name="Latreille P."/>
            <person name="Courtney L."/>
            <person name="Cloud J."/>
            <person name="Abbott A."/>
            <person name="Scott K."/>
            <person name="Johnson D."/>
            <person name="Minx P."/>
            <person name="Bentley D."/>
            <person name="Fulton B."/>
            <person name="Miller N."/>
            <person name="Greco T."/>
            <person name="Kemp K."/>
            <person name="Kramer J."/>
            <person name="Fulton L."/>
            <person name="Mardis E."/>
            <person name="Dante M."/>
            <person name="Pepin K."/>
            <person name="Hillier L.W."/>
            <person name="Nelson J."/>
            <person name="Spieth J."/>
            <person name="Ryan E."/>
            <person name="Andrews S."/>
            <person name="Geisel C."/>
            <person name="Layman D."/>
            <person name="Du H."/>
            <person name="Ali J."/>
            <person name="Berghoff A."/>
            <person name="Jones K."/>
            <person name="Drone K."/>
            <person name="Cotton M."/>
            <person name="Joshu C."/>
            <person name="Antonoiu B."/>
            <person name="Zidanic M."/>
            <person name="Strong C."/>
            <person name="Sun H."/>
            <person name="Lamar B."/>
            <person name="Yordan C."/>
            <person name="Ma P."/>
            <person name="Zhong J."/>
            <person name="Preston R."/>
            <person name="Vil D."/>
            <person name="Shekher M."/>
            <person name="Matero A."/>
            <person name="Shah R."/>
            <person name="Swaby I.K."/>
            <person name="O'Shaughnessy A."/>
            <person name="Rodriguez M."/>
            <person name="Hoffman J."/>
            <person name="Till S."/>
            <person name="Granat S."/>
            <person name="Shohdy N."/>
            <person name="Hasegawa A."/>
            <person name="Hameed A."/>
            <person name="Lodhi M."/>
            <person name="Johnson A."/>
            <person name="Chen E."/>
            <person name="Marra M.A."/>
            <person name="Martienssen R."/>
            <person name="McCombie W.R."/>
        </authorList>
    </citation>
    <scope>NUCLEOTIDE SEQUENCE [LARGE SCALE GENOMIC DNA]</scope>
    <source>
        <strain>cv. Columbia</strain>
    </source>
</reference>
<reference key="2">
    <citation type="journal article" date="2017" name="Plant J.">
        <title>Araport11: a complete reannotation of the Arabidopsis thaliana reference genome.</title>
        <authorList>
            <person name="Cheng C.Y."/>
            <person name="Krishnakumar V."/>
            <person name="Chan A.P."/>
            <person name="Thibaud-Nissen F."/>
            <person name="Schobel S."/>
            <person name="Town C.D."/>
        </authorList>
    </citation>
    <scope>GENOME REANNOTATION</scope>
    <source>
        <strain>cv. Columbia</strain>
    </source>
</reference>
<reference key="3">
    <citation type="journal article" date="2003" name="Science">
        <title>Empirical analysis of transcriptional activity in the Arabidopsis genome.</title>
        <authorList>
            <person name="Yamada K."/>
            <person name="Lim J."/>
            <person name="Dale J.M."/>
            <person name="Chen H."/>
            <person name="Shinn P."/>
            <person name="Palm C.J."/>
            <person name="Southwick A.M."/>
            <person name="Wu H.C."/>
            <person name="Kim C.J."/>
            <person name="Nguyen M."/>
            <person name="Pham P.K."/>
            <person name="Cheuk R.F."/>
            <person name="Karlin-Newmann G."/>
            <person name="Liu S.X."/>
            <person name="Lam B."/>
            <person name="Sakano H."/>
            <person name="Wu T."/>
            <person name="Yu G."/>
            <person name="Miranda M."/>
            <person name="Quach H.L."/>
            <person name="Tripp M."/>
            <person name="Chang C.H."/>
            <person name="Lee J.M."/>
            <person name="Toriumi M.J."/>
            <person name="Chan M.M."/>
            <person name="Tang C.C."/>
            <person name="Onodera C.S."/>
            <person name="Deng J.M."/>
            <person name="Akiyama K."/>
            <person name="Ansari Y."/>
            <person name="Arakawa T."/>
            <person name="Banh J."/>
            <person name="Banno F."/>
            <person name="Bowser L."/>
            <person name="Brooks S.Y."/>
            <person name="Carninci P."/>
            <person name="Chao Q."/>
            <person name="Choy N."/>
            <person name="Enju A."/>
            <person name="Goldsmith A.D."/>
            <person name="Gurjal M."/>
            <person name="Hansen N.F."/>
            <person name="Hayashizaki Y."/>
            <person name="Johnson-Hopson C."/>
            <person name="Hsuan V.W."/>
            <person name="Iida K."/>
            <person name="Karnes M."/>
            <person name="Khan S."/>
            <person name="Koesema E."/>
            <person name="Ishida J."/>
            <person name="Jiang P.X."/>
            <person name="Jones T."/>
            <person name="Kawai J."/>
            <person name="Kamiya A."/>
            <person name="Meyers C."/>
            <person name="Nakajima M."/>
            <person name="Narusaka M."/>
            <person name="Seki M."/>
            <person name="Sakurai T."/>
            <person name="Satou M."/>
            <person name="Tamse R."/>
            <person name="Vaysberg M."/>
            <person name="Wallender E.K."/>
            <person name="Wong C."/>
            <person name="Yamamura Y."/>
            <person name="Yuan S."/>
            <person name="Shinozaki K."/>
            <person name="Davis R.W."/>
            <person name="Theologis A."/>
            <person name="Ecker J.R."/>
        </authorList>
    </citation>
    <scope>NUCLEOTIDE SEQUENCE [LARGE SCALE MRNA]</scope>
    <source>
        <strain>cv. Columbia</strain>
    </source>
</reference>
<reference key="4">
    <citation type="journal article" date="2001" name="New Phytol.">
        <title>The CDPK superfamily of protein kinases.</title>
        <authorList>
            <person name="Harmon A.C."/>
            <person name="Gribskov M."/>
            <person name="Gubrium E."/>
            <person name="Harper J.F."/>
        </authorList>
    </citation>
    <scope>GENE FAMILY</scope>
    <scope>NOMENCLATURE</scope>
</reference>
<reference key="5">
    <citation type="journal article" date="2002" name="Plant Physiol.">
        <title>Calcium signaling through protein kinases. The Arabidopsis calcium-dependent protein kinase gene family.</title>
        <authorList>
            <person name="Cheng S.-H."/>
            <person name="Willmann M.R."/>
            <person name="Chen H.-C."/>
            <person name="Sheen J."/>
        </authorList>
    </citation>
    <scope>GENE FAMILY</scope>
    <scope>NOMENCLATURE</scope>
</reference>
<reference key="6">
    <citation type="journal article" date="2003" name="Plant Physiol.">
        <title>The Arabidopsis CDPK-SnRK superfamily of protein kinases.</title>
        <authorList>
            <person name="Hrabak E.M."/>
            <person name="Chan C.W.M."/>
            <person name="Gribskov M."/>
            <person name="Harper J.F."/>
            <person name="Choi J.H."/>
            <person name="Halford N."/>
            <person name="Kudla J."/>
            <person name="Luan S."/>
            <person name="Nimmo H.G."/>
            <person name="Sussman M.R."/>
            <person name="Thomas M."/>
            <person name="Walker-Simmons K."/>
            <person name="Zhu J.-K."/>
            <person name="Harmon A.C."/>
        </authorList>
    </citation>
    <scope>GENE FAMILY</scope>
    <scope>NOMENCLATURE</scope>
</reference>
<reference key="7">
    <citation type="journal article" date="2003" name="Plant Physiol.">
        <title>Subcellular targeting of nine calcium-dependent protein kinase isoforms from Arabidopsis.</title>
        <authorList>
            <person name="Dammann C."/>
            <person name="Ichida A."/>
            <person name="Hong B."/>
            <person name="Romanowsky S.M."/>
            <person name="Hrabak E.M."/>
            <person name="Harmon A.C."/>
            <person name="Pickard B.G."/>
            <person name="Harper J.F."/>
        </authorList>
    </citation>
    <scope>SUBCELLULAR LOCATION</scope>
</reference>
<reference key="8">
    <citation type="journal article" date="2010" name="Proc. Natl. Acad. Sci. U.S.A.">
        <title>Guard cell anion channel SLAC1 is regulated by CDPK protein kinases with distinct Ca2+ affinities.</title>
        <authorList>
            <person name="Geiger D."/>
            <person name="Scherzer S."/>
            <person name="Mumm P."/>
            <person name="Marten I."/>
            <person name="Ache P."/>
            <person name="Matschi S."/>
            <person name="Liese A."/>
            <person name="Wellmann C."/>
            <person name="Al-Rasheid K.A.S."/>
            <person name="Grill E."/>
            <person name="Romeis T."/>
            <person name="Hedrich R."/>
        </authorList>
    </citation>
    <scope>FUNCTION</scope>
    <scope>INTERACTION WITH SLAC1 AND ABI1</scope>
    <scope>ACTIVITY REGULATION</scope>
</reference>
<name>CDPKL_ARATH</name>
<evidence type="ECO:0000250" key="1"/>
<evidence type="ECO:0000250" key="2">
    <source>
        <dbReference type="UniProtKB" id="Q9FKW4"/>
    </source>
</evidence>
<evidence type="ECO:0000255" key="3"/>
<evidence type="ECO:0000255" key="4">
    <source>
        <dbReference type="PROSITE-ProRule" id="PRU00159"/>
    </source>
</evidence>
<evidence type="ECO:0000255" key="5">
    <source>
        <dbReference type="PROSITE-ProRule" id="PRU00448"/>
    </source>
</evidence>
<evidence type="ECO:0000255" key="6">
    <source>
        <dbReference type="PROSITE-ProRule" id="PRU10027"/>
    </source>
</evidence>
<evidence type="ECO:0000256" key="7">
    <source>
        <dbReference type="SAM" id="MobiDB-lite"/>
    </source>
</evidence>
<evidence type="ECO:0000269" key="8">
    <source>
    </source>
</evidence>
<evidence type="ECO:0000269" key="9">
    <source>
    </source>
</evidence>
<evidence type="ECO:0000305" key="10"/>
<proteinExistence type="evidence at protein level"/>
<feature type="initiator methionine" description="Removed" evidence="3">
    <location>
        <position position="1"/>
    </location>
</feature>
<feature type="chain" id="PRO_0000363343" description="Calcium-dependent protein kinase 21">
    <location>
        <begin position="2"/>
        <end position="531"/>
    </location>
</feature>
<feature type="domain" description="Protein kinase" evidence="4">
    <location>
        <begin position="80"/>
        <end position="338"/>
    </location>
</feature>
<feature type="domain" description="EF-hand 1" evidence="5">
    <location>
        <begin position="380"/>
        <end position="415"/>
    </location>
</feature>
<feature type="domain" description="EF-hand 2" evidence="5">
    <location>
        <begin position="416"/>
        <end position="451"/>
    </location>
</feature>
<feature type="domain" description="EF-hand 3" evidence="5">
    <location>
        <begin position="452"/>
        <end position="487"/>
    </location>
</feature>
<feature type="domain" description="EF-hand 4" evidence="5">
    <location>
        <begin position="488"/>
        <end position="522"/>
    </location>
</feature>
<feature type="region of interest" description="Disordered" evidence="7">
    <location>
        <begin position="1"/>
        <end position="62"/>
    </location>
</feature>
<feature type="region of interest" description="Autoinhibitory domain" evidence="1">
    <location>
        <begin position="343"/>
        <end position="373"/>
    </location>
</feature>
<feature type="compositionally biased region" description="Basic residues" evidence="7">
    <location>
        <begin position="1"/>
        <end position="10"/>
    </location>
</feature>
<feature type="compositionally biased region" description="Polar residues" evidence="7">
    <location>
        <begin position="48"/>
        <end position="60"/>
    </location>
</feature>
<feature type="active site" description="Proton acceptor" evidence="4 6">
    <location>
        <position position="204"/>
    </location>
</feature>
<feature type="binding site" evidence="4">
    <location>
        <begin position="86"/>
        <end position="94"/>
    </location>
    <ligand>
        <name>ATP</name>
        <dbReference type="ChEBI" id="CHEBI:30616"/>
    </ligand>
</feature>
<feature type="binding site" evidence="4">
    <location>
        <position position="109"/>
    </location>
    <ligand>
        <name>ATP</name>
        <dbReference type="ChEBI" id="CHEBI:30616"/>
    </ligand>
</feature>
<feature type="binding site" evidence="5">
    <location>
        <position position="393"/>
    </location>
    <ligand>
        <name>Ca(2+)</name>
        <dbReference type="ChEBI" id="CHEBI:29108"/>
        <label>1</label>
    </ligand>
</feature>
<feature type="binding site" evidence="5">
    <location>
        <position position="395"/>
    </location>
    <ligand>
        <name>Ca(2+)</name>
        <dbReference type="ChEBI" id="CHEBI:29108"/>
        <label>1</label>
    </ligand>
</feature>
<feature type="binding site" evidence="5">
    <location>
        <position position="397"/>
    </location>
    <ligand>
        <name>Ca(2+)</name>
        <dbReference type="ChEBI" id="CHEBI:29108"/>
        <label>1</label>
    </ligand>
</feature>
<feature type="binding site" evidence="5">
    <location>
        <position position="399"/>
    </location>
    <ligand>
        <name>Ca(2+)</name>
        <dbReference type="ChEBI" id="CHEBI:29108"/>
        <label>1</label>
    </ligand>
</feature>
<feature type="binding site" evidence="5">
    <location>
        <position position="404"/>
    </location>
    <ligand>
        <name>Ca(2+)</name>
        <dbReference type="ChEBI" id="CHEBI:29108"/>
        <label>1</label>
    </ligand>
</feature>
<feature type="binding site" evidence="5">
    <location>
        <position position="429"/>
    </location>
    <ligand>
        <name>Ca(2+)</name>
        <dbReference type="ChEBI" id="CHEBI:29108"/>
        <label>2</label>
    </ligand>
</feature>
<feature type="binding site" evidence="5">
    <location>
        <position position="431"/>
    </location>
    <ligand>
        <name>Ca(2+)</name>
        <dbReference type="ChEBI" id="CHEBI:29108"/>
        <label>2</label>
    </ligand>
</feature>
<feature type="binding site" evidence="5">
    <location>
        <position position="433"/>
    </location>
    <ligand>
        <name>Ca(2+)</name>
        <dbReference type="ChEBI" id="CHEBI:29108"/>
        <label>2</label>
    </ligand>
</feature>
<feature type="binding site" evidence="5">
    <location>
        <position position="435"/>
    </location>
    <ligand>
        <name>Ca(2+)</name>
        <dbReference type="ChEBI" id="CHEBI:29108"/>
        <label>2</label>
    </ligand>
</feature>
<feature type="binding site" evidence="5">
    <location>
        <position position="440"/>
    </location>
    <ligand>
        <name>Ca(2+)</name>
        <dbReference type="ChEBI" id="CHEBI:29108"/>
        <label>2</label>
    </ligand>
</feature>
<feature type="binding site" evidence="5">
    <location>
        <position position="465"/>
    </location>
    <ligand>
        <name>Ca(2+)</name>
        <dbReference type="ChEBI" id="CHEBI:29108"/>
        <label>3</label>
    </ligand>
</feature>
<feature type="binding site" evidence="5">
    <location>
        <position position="467"/>
    </location>
    <ligand>
        <name>Ca(2+)</name>
        <dbReference type="ChEBI" id="CHEBI:29108"/>
        <label>3</label>
    </ligand>
</feature>
<feature type="binding site" evidence="5">
    <location>
        <position position="469"/>
    </location>
    <ligand>
        <name>Ca(2+)</name>
        <dbReference type="ChEBI" id="CHEBI:29108"/>
        <label>3</label>
    </ligand>
</feature>
<feature type="binding site" evidence="5">
    <location>
        <position position="471"/>
    </location>
    <ligand>
        <name>Ca(2+)</name>
        <dbReference type="ChEBI" id="CHEBI:29108"/>
        <label>3</label>
    </ligand>
</feature>
<feature type="binding site" evidence="5">
    <location>
        <position position="476"/>
    </location>
    <ligand>
        <name>Ca(2+)</name>
        <dbReference type="ChEBI" id="CHEBI:29108"/>
        <label>3</label>
    </ligand>
</feature>
<feature type="binding site" evidence="5">
    <location>
        <position position="500"/>
    </location>
    <ligand>
        <name>Ca(2+)</name>
        <dbReference type="ChEBI" id="CHEBI:29108"/>
        <label>4</label>
    </ligand>
</feature>
<feature type="binding site" evidence="5">
    <location>
        <position position="502"/>
    </location>
    <ligand>
        <name>Ca(2+)</name>
        <dbReference type="ChEBI" id="CHEBI:29108"/>
        <label>4</label>
    </ligand>
</feature>
<feature type="binding site" evidence="5">
    <location>
        <position position="504"/>
    </location>
    <ligand>
        <name>Ca(2+)</name>
        <dbReference type="ChEBI" id="CHEBI:29108"/>
        <label>4</label>
    </ligand>
</feature>
<feature type="binding site" evidence="5">
    <location>
        <position position="506"/>
    </location>
    <ligand>
        <name>Ca(2+)</name>
        <dbReference type="ChEBI" id="CHEBI:29108"/>
        <label>4</label>
    </ligand>
</feature>
<feature type="binding site" evidence="5">
    <location>
        <position position="511"/>
    </location>
    <ligand>
        <name>Ca(2+)</name>
        <dbReference type="ChEBI" id="CHEBI:29108"/>
        <label>4</label>
    </ligand>
</feature>
<feature type="modified residue" description="Phosphoserine" evidence="2">
    <location>
        <position position="244"/>
    </location>
</feature>
<feature type="lipid moiety-binding region" description="N-myristoyl glycine" evidence="3">
    <location>
        <position position="2"/>
    </location>
</feature>
<feature type="sequence conflict" description="In Ref. 3; AAK92828." evidence="10" ref="3">
    <original>N</original>
    <variation>S</variation>
    <location>
        <position position="468"/>
    </location>
</feature>
<comment type="function">
    <text evidence="9">May play a role in signal transduction pathways that involve calcium as a second messenger. Mediates the phosphorylation and activation of the S-type anion efflux channel SLAC1.</text>
</comment>
<comment type="catalytic activity">
    <reaction>
        <text>L-seryl-[protein] + ATP = O-phospho-L-seryl-[protein] + ADP + H(+)</text>
        <dbReference type="Rhea" id="RHEA:17989"/>
        <dbReference type="Rhea" id="RHEA-COMP:9863"/>
        <dbReference type="Rhea" id="RHEA-COMP:11604"/>
        <dbReference type="ChEBI" id="CHEBI:15378"/>
        <dbReference type="ChEBI" id="CHEBI:29999"/>
        <dbReference type="ChEBI" id="CHEBI:30616"/>
        <dbReference type="ChEBI" id="CHEBI:83421"/>
        <dbReference type="ChEBI" id="CHEBI:456216"/>
        <dbReference type="EC" id="2.7.11.1"/>
    </reaction>
</comment>
<comment type="catalytic activity">
    <reaction>
        <text>L-threonyl-[protein] + ATP = O-phospho-L-threonyl-[protein] + ADP + H(+)</text>
        <dbReference type="Rhea" id="RHEA:46608"/>
        <dbReference type="Rhea" id="RHEA-COMP:11060"/>
        <dbReference type="Rhea" id="RHEA-COMP:11605"/>
        <dbReference type="ChEBI" id="CHEBI:15378"/>
        <dbReference type="ChEBI" id="CHEBI:30013"/>
        <dbReference type="ChEBI" id="CHEBI:30616"/>
        <dbReference type="ChEBI" id="CHEBI:61977"/>
        <dbReference type="ChEBI" id="CHEBI:456216"/>
        <dbReference type="EC" id="2.7.11.1"/>
    </reaction>
</comment>
<comment type="activity regulation">
    <text evidence="1">Activated by calcium. Autophosphorylation may play an important role in the regulation of the kinase activity (By similarity).</text>
</comment>
<comment type="subunit">
    <text evidence="9">Interacts with SLAC1 and ABI1.</text>
</comment>
<comment type="interaction">
    <interactant intactId="EBI-8519603">
        <id>Q9ZSA2</id>
    </interactant>
    <interactant intactId="EBI-11174918">
        <id>Q9LD83</id>
        <label>SLAC1</label>
    </interactant>
    <organismsDiffer>false</organismsDiffer>
    <experiments>2</experiments>
</comment>
<comment type="subcellular location">
    <subcellularLocation>
        <location evidence="8">Cell membrane</location>
        <topology evidence="8">Lipid-anchor</topology>
    </subcellularLocation>
</comment>
<comment type="domain">
    <text evidence="1">There are 3 contiguous domains conserved in the CDPK subfamily: a kinase domain, an autoinhibitory (junction) domain and a calmodulin-like domain. The autoinhibitory domain (343-373) inactivates kinase activity under calcium-free conditions (By similarity).</text>
</comment>
<comment type="similarity">
    <text evidence="4">Belongs to the protein kinase superfamily. Ser/Thr protein kinase family. CDPK subfamily.</text>
</comment>
<keyword id="KW-0067">ATP-binding</keyword>
<keyword id="KW-0106">Calcium</keyword>
<keyword id="KW-1003">Cell membrane</keyword>
<keyword id="KW-0418">Kinase</keyword>
<keyword id="KW-0449">Lipoprotein</keyword>
<keyword id="KW-0472">Membrane</keyword>
<keyword id="KW-0479">Metal-binding</keyword>
<keyword id="KW-0519">Myristate</keyword>
<keyword id="KW-0547">Nucleotide-binding</keyword>
<keyword id="KW-0597">Phosphoprotein</keyword>
<keyword id="KW-1185">Reference proteome</keyword>
<keyword id="KW-0677">Repeat</keyword>
<keyword id="KW-0723">Serine/threonine-protein kinase</keyword>
<keyword id="KW-0808">Transferase</keyword>
<gene>
    <name type="primary">CPK21</name>
    <name type="ordered locus">At4g04720</name>
    <name type="ORF">T4B21.13</name>
</gene>
<sequence>MGCFSSKHRKTQNDGGEKSIPINPVQTHVVPEHRKPQTPTPKPMTQPIHQQISTPSSNPVSVRDPDTILGKPFEDIRKFYSLGKELGRGQFGITYMCKEIGTGNTYACKSILKRKLISKQDKEDVKREIQIMQYLSGQPNIVEIKGAYEDRQSIHLVMELCAGGELFDRIIAQGHYSERAAAGIIRSIVNVVQICHFMGVVHRDLKPENFLLSSKEENAMLKATDFGLSVFIEEGKVYRDIVGSAYYVAPEVLRRSYGKEIDIWSAGVILYILLSGVPPFWAENEKGIFDEVIKGEIDFVSEPWPSISESAKDLVRKMLTKDPKRRITAAQVLEHPWIKGGEAPDKPIDSAVLSRMKQFRAMNKLKKLALKVIAESLSEEEIKGLKTMFANIDTDKSGTITYEELKTGLTRLGSRLSETEVKQLMEAADVDGNGTIDYYEFISATMHRYKLDRDEHVYKAFQHFDKDNSGHITRDELESAMKEYGMGDEASIKEVISEVDTDNDGRINFEEFCAMMRSGSTQPQGKLLPFH</sequence>
<organism>
    <name type="scientific">Arabidopsis thaliana</name>
    <name type="common">Mouse-ear cress</name>
    <dbReference type="NCBI Taxonomy" id="3702"/>
    <lineage>
        <taxon>Eukaryota</taxon>
        <taxon>Viridiplantae</taxon>
        <taxon>Streptophyta</taxon>
        <taxon>Embryophyta</taxon>
        <taxon>Tracheophyta</taxon>
        <taxon>Spermatophyta</taxon>
        <taxon>Magnoliopsida</taxon>
        <taxon>eudicotyledons</taxon>
        <taxon>Gunneridae</taxon>
        <taxon>Pentapetalae</taxon>
        <taxon>rosids</taxon>
        <taxon>malvids</taxon>
        <taxon>Brassicales</taxon>
        <taxon>Brassicaceae</taxon>
        <taxon>Camelineae</taxon>
        <taxon>Arabidopsis</taxon>
    </lineage>
</organism>
<accession>Q9ZSA2</accession>
<accession>Q949U0</accession>
<dbReference type="EC" id="2.7.11.1"/>
<dbReference type="EMBL" id="AF118223">
    <property type="protein sequence ID" value="AAD03453.1"/>
    <property type="molecule type" value="Genomic_DNA"/>
</dbReference>
<dbReference type="EMBL" id="AL161501">
    <property type="protein sequence ID" value="CAB80837.1"/>
    <property type="molecule type" value="Genomic_DNA"/>
</dbReference>
<dbReference type="EMBL" id="CP002687">
    <property type="protein sequence ID" value="AEE82416.1"/>
    <property type="molecule type" value="Genomic_DNA"/>
</dbReference>
<dbReference type="EMBL" id="CP002687">
    <property type="protein sequence ID" value="ANM66394.1"/>
    <property type="molecule type" value="Genomic_DNA"/>
</dbReference>
<dbReference type="EMBL" id="AY050891">
    <property type="protein sequence ID" value="AAK92828.1"/>
    <property type="molecule type" value="mRNA"/>
</dbReference>
<dbReference type="EMBL" id="AY150502">
    <property type="protein sequence ID" value="AAN13018.1"/>
    <property type="molecule type" value="mRNA"/>
</dbReference>
<dbReference type="PIR" id="D85059">
    <property type="entry name" value="D85059"/>
</dbReference>
<dbReference type="RefSeq" id="NP_001319867.1">
    <property type="nucleotide sequence ID" value="NM_001340500.1"/>
</dbReference>
<dbReference type="RefSeq" id="NP_192381.1">
    <property type="nucleotide sequence ID" value="NM_116710.3"/>
</dbReference>
<dbReference type="SMR" id="Q9ZSA2"/>
<dbReference type="BioGRID" id="11118">
    <property type="interactions" value="6"/>
</dbReference>
<dbReference type="DIP" id="DIP-59320N"/>
<dbReference type="FunCoup" id="Q9ZSA2">
    <property type="interactions" value="2732"/>
</dbReference>
<dbReference type="IntAct" id="Q9ZSA2">
    <property type="interactions" value="3"/>
</dbReference>
<dbReference type="MINT" id="Q9ZSA2"/>
<dbReference type="STRING" id="3702.Q9ZSA2"/>
<dbReference type="iPTMnet" id="Q9ZSA2"/>
<dbReference type="SwissPalm" id="Q9ZSA2"/>
<dbReference type="PaxDb" id="3702-AT4G04720.1"/>
<dbReference type="ProteomicsDB" id="220605"/>
<dbReference type="EnsemblPlants" id="AT4G04720.1">
    <property type="protein sequence ID" value="AT4G04720.1"/>
    <property type="gene ID" value="AT4G04720"/>
</dbReference>
<dbReference type="EnsemblPlants" id="AT4G04720.2">
    <property type="protein sequence ID" value="AT4G04720.2"/>
    <property type="gene ID" value="AT4G04720"/>
</dbReference>
<dbReference type="GeneID" id="825807"/>
<dbReference type="Gramene" id="AT4G04720.1">
    <property type="protein sequence ID" value="AT4G04720.1"/>
    <property type="gene ID" value="AT4G04720"/>
</dbReference>
<dbReference type="Gramene" id="AT4G04720.2">
    <property type="protein sequence ID" value="AT4G04720.2"/>
    <property type="gene ID" value="AT4G04720"/>
</dbReference>
<dbReference type="KEGG" id="ath:AT4G04720"/>
<dbReference type="Araport" id="AT4G04720"/>
<dbReference type="TAIR" id="AT4G04720">
    <property type="gene designation" value="CPK21"/>
</dbReference>
<dbReference type="eggNOG" id="KOG0032">
    <property type="taxonomic scope" value="Eukaryota"/>
</dbReference>
<dbReference type="HOGENOM" id="CLU_000288_37_4_1"/>
<dbReference type="InParanoid" id="Q9ZSA2"/>
<dbReference type="OMA" id="PFDGQQD"/>
<dbReference type="PhylomeDB" id="Q9ZSA2"/>
<dbReference type="BRENDA" id="2.7.11.1">
    <property type="organism ID" value="399"/>
</dbReference>
<dbReference type="PRO" id="PR:Q9ZSA2"/>
<dbReference type="Proteomes" id="UP000006548">
    <property type="component" value="Chromosome 4"/>
</dbReference>
<dbReference type="ExpressionAtlas" id="Q9ZSA2">
    <property type="expression patterns" value="baseline and differential"/>
</dbReference>
<dbReference type="GO" id="GO:0005829">
    <property type="term" value="C:cytosol"/>
    <property type="evidence" value="ECO:0007005"/>
    <property type="project" value="TAIR"/>
</dbReference>
<dbReference type="GO" id="GO:0005886">
    <property type="term" value="C:plasma membrane"/>
    <property type="evidence" value="ECO:0007005"/>
    <property type="project" value="TAIR"/>
</dbReference>
<dbReference type="GO" id="GO:0009506">
    <property type="term" value="C:plasmodesma"/>
    <property type="evidence" value="ECO:0007005"/>
    <property type="project" value="TAIR"/>
</dbReference>
<dbReference type="GO" id="GO:0005524">
    <property type="term" value="F:ATP binding"/>
    <property type="evidence" value="ECO:0007669"/>
    <property type="project" value="UniProtKB-KW"/>
</dbReference>
<dbReference type="GO" id="GO:0005509">
    <property type="term" value="F:calcium ion binding"/>
    <property type="evidence" value="ECO:0007669"/>
    <property type="project" value="InterPro"/>
</dbReference>
<dbReference type="GO" id="GO:0004672">
    <property type="term" value="F:protein kinase activity"/>
    <property type="evidence" value="ECO:0000314"/>
    <property type="project" value="UniProtKB"/>
</dbReference>
<dbReference type="GO" id="GO:0019903">
    <property type="term" value="F:protein phosphatase binding"/>
    <property type="evidence" value="ECO:0000353"/>
    <property type="project" value="UniProtKB"/>
</dbReference>
<dbReference type="GO" id="GO:0106310">
    <property type="term" value="F:protein serine kinase activity"/>
    <property type="evidence" value="ECO:0007669"/>
    <property type="project" value="RHEA"/>
</dbReference>
<dbReference type="GO" id="GO:0004674">
    <property type="term" value="F:protein serine/threonine kinase activity"/>
    <property type="evidence" value="ECO:0007669"/>
    <property type="project" value="UniProtKB-KW"/>
</dbReference>
<dbReference type="CDD" id="cd05117">
    <property type="entry name" value="STKc_CAMK"/>
    <property type="match status" value="1"/>
</dbReference>
<dbReference type="FunFam" id="1.10.238.10:FF:000015">
    <property type="entry name" value="Calcium-dependent protein kinase 1"/>
    <property type="match status" value="1"/>
</dbReference>
<dbReference type="FunFam" id="3.30.200.20:FF:000004">
    <property type="entry name" value="Calcium-dependent protein kinase 1"/>
    <property type="match status" value="1"/>
</dbReference>
<dbReference type="FunFam" id="1.10.510.10:FF:000056">
    <property type="entry name" value="calcium-dependent protein kinase 1"/>
    <property type="match status" value="1"/>
</dbReference>
<dbReference type="Gene3D" id="1.10.238.10">
    <property type="entry name" value="EF-hand"/>
    <property type="match status" value="1"/>
</dbReference>
<dbReference type="Gene3D" id="3.30.200.20">
    <property type="entry name" value="Phosphorylase Kinase, domain 1"/>
    <property type="match status" value="1"/>
</dbReference>
<dbReference type="Gene3D" id="1.10.510.10">
    <property type="entry name" value="Transferase(Phosphotransferase) domain 1"/>
    <property type="match status" value="1"/>
</dbReference>
<dbReference type="InterPro" id="IPR050205">
    <property type="entry name" value="CDPK_Ser/Thr_kinases"/>
</dbReference>
<dbReference type="InterPro" id="IPR011992">
    <property type="entry name" value="EF-hand-dom_pair"/>
</dbReference>
<dbReference type="InterPro" id="IPR018247">
    <property type="entry name" value="EF_Hand_1_Ca_BS"/>
</dbReference>
<dbReference type="InterPro" id="IPR002048">
    <property type="entry name" value="EF_hand_dom"/>
</dbReference>
<dbReference type="InterPro" id="IPR011009">
    <property type="entry name" value="Kinase-like_dom_sf"/>
</dbReference>
<dbReference type="InterPro" id="IPR000719">
    <property type="entry name" value="Prot_kinase_dom"/>
</dbReference>
<dbReference type="InterPro" id="IPR017441">
    <property type="entry name" value="Protein_kinase_ATP_BS"/>
</dbReference>
<dbReference type="InterPro" id="IPR008271">
    <property type="entry name" value="Ser/Thr_kinase_AS"/>
</dbReference>
<dbReference type="PANTHER" id="PTHR24349">
    <property type="entry name" value="SERINE/THREONINE-PROTEIN KINASE"/>
    <property type="match status" value="1"/>
</dbReference>
<dbReference type="Pfam" id="PF13499">
    <property type="entry name" value="EF-hand_7"/>
    <property type="match status" value="2"/>
</dbReference>
<dbReference type="Pfam" id="PF00069">
    <property type="entry name" value="Pkinase"/>
    <property type="match status" value="1"/>
</dbReference>
<dbReference type="SMART" id="SM00054">
    <property type="entry name" value="EFh"/>
    <property type="match status" value="4"/>
</dbReference>
<dbReference type="SMART" id="SM00220">
    <property type="entry name" value="S_TKc"/>
    <property type="match status" value="1"/>
</dbReference>
<dbReference type="SUPFAM" id="SSF47473">
    <property type="entry name" value="EF-hand"/>
    <property type="match status" value="1"/>
</dbReference>
<dbReference type="SUPFAM" id="SSF56112">
    <property type="entry name" value="Protein kinase-like (PK-like)"/>
    <property type="match status" value="1"/>
</dbReference>
<dbReference type="PROSITE" id="PS00018">
    <property type="entry name" value="EF_HAND_1"/>
    <property type="match status" value="4"/>
</dbReference>
<dbReference type="PROSITE" id="PS50222">
    <property type="entry name" value="EF_HAND_2"/>
    <property type="match status" value="4"/>
</dbReference>
<dbReference type="PROSITE" id="PS00107">
    <property type="entry name" value="PROTEIN_KINASE_ATP"/>
    <property type="match status" value="1"/>
</dbReference>
<dbReference type="PROSITE" id="PS50011">
    <property type="entry name" value="PROTEIN_KINASE_DOM"/>
    <property type="match status" value="1"/>
</dbReference>
<dbReference type="PROSITE" id="PS00108">
    <property type="entry name" value="PROTEIN_KINASE_ST"/>
    <property type="match status" value="1"/>
</dbReference>
<protein>
    <recommendedName>
        <fullName>Calcium-dependent protein kinase 21</fullName>
        <ecNumber>2.7.11.1</ecNumber>
    </recommendedName>
</protein>